<sequence>MSVRESFNPESYELDKNFRLTRFTELKGTGCKVPQDVLQKLLESLQENHYQEDEQFLGAVMPRLGIGMDTCVIPLRHGGLSLVQTTDYIYPIVDDPYMMGRIACANVLSDLYAMGVTECDNMLMLLGVSNKLTEKERDKVMPLVIQGFKDASEEAGTSVTGGQTVINPWIVLGGVATTVCQPNEFIMPDNAVPGDVLVLTKPLGTQVAVAVHQWLDIPEKWNKIKLVVTQEDVELAYQEAMLNMARLNRTAAGLMHTFNAHAATDITGFGILGHAQNLARQQRTEVSFVIHNLPVLAKMAAVSKACGNMFGLMHGTCPETSGGLLICLPREQAARFCAEIKSPKYGEGHQAWIIGIVEKGNRTARIIDKPRIIEVAPQVATQNVNTTPGATS</sequence>
<protein>
    <recommendedName>
        <fullName>Selenide, water dikinase 1</fullName>
        <ecNumber evidence="2">2.7.9.3</ecNumber>
    </recommendedName>
    <alternativeName>
        <fullName>Selenium donor protein 1</fullName>
    </alternativeName>
    <alternativeName>
        <fullName>Selenophosphate synthase 1</fullName>
    </alternativeName>
</protein>
<proteinExistence type="evidence at protein level"/>
<evidence type="ECO:0000250" key="1">
    <source>
        <dbReference type="UniProtKB" id="P16456"/>
    </source>
</evidence>
<evidence type="ECO:0000250" key="2">
    <source>
        <dbReference type="UniProtKB" id="P49903"/>
    </source>
</evidence>
<evidence type="ECO:0000255" key="3"/>
<evidence type="ECO:0000269" key="4">
    <source>
    </source>
</evidence>
<evidence type="ECO:0000305" key="5"/>
<reference key="1">
    <citation type="journal article" date="2013" name="Nature">
        <title>The zebrafish reference genome sequence and its relationship to the human genome.</title>
        <authorList>
            <person name="Howe K."/>
            <person name="Clark M.D."/>
            <person name="Torroja C.F."/>
            <person name="Torrance J."/>
            <person name="Berthelot C."/>
            <person name="Muffato M."/>
            <person name="Collins J.E."/>
            <person name="Humphray S."/>
            <person name="McLaren K."/>
            <person name="Matthews L."/>
            <person name="McLaren S."/>
            <person name="Sealy I."/>
            <person name="Caccamo M."/>
            <person name="Churcher C."/>
            <person name="Scott C."/>
            <person name="Barrett J.C."/>
            <person name="Koch R."/>
            <person name="Rauch G.J."/>
            <person name="White S."/>
            <person name="Chow W."/>
            <person name="Kilian B."/>
            <person name="Quintais L.T."/>
            <person name="Guerra-Assuncao J.A."/>
            <person name="Zhou Y."/>
            <person name="Gu Y."/>
            <person name="Yen J."/>
            <person name="Vogel J.H."/>
            <person name="Eyre T."/>
            <person name="Redmond S."/>
            <person name="Banerjee R."/>
            <person name="Chi J."/>
            <person name="Fu B."/>
            <person name="Langley E."/>
            <person name="Maguire S.F."/>
            <person name="Laird G.K."/>
            <person name="Lloyd D."/>
            <person name="Kenyon E."/>
            <person name="Donaldson S."/>
            <person name="Sehra H."/>
            <person name="Almeida-King J."/>
            <person name="Loveland J."/>
            <person name="Trevanion S."/>
            <person name="Jones M."/>
            <person name="Quail M."/>
            <person name="Willey D."/>
            <person name="Hunt A."/>
            <person name="Burton J."/>
            <person name="Sims S."/>
            <person name="McLay K."/>
            <person name="Plumb B."/>
            <person name="Davis J."/>
            <person name="Clee C."/>
            <person name="Oliver K."/>
            <person name="Clark R."/>
            <person name="Riddle C."/>
            <person name="Elliot D."/>
            <person name="Threadgold G."/>
            <person name="Harden G."/>
            <person name="Ware D."/>
            <person name="Begum S."/>
            <person name="Mortimore B."/>
            <person name="Kerry G."/>
            <person name="Heath P."/>
            <person name="Phillimore B."/>
            <person name="Tracey A."/>
            <person name="Corby N."/>
            <person name="Dunn M."/>
            <person name="Johnson C."/>
            <person name="Wood J."/>
            <person name="Clark S."/>
            <person name="Pelan S."/>
            <person name="Griffiths G."/>
            <person name="Smith M."/>
            <person name="Glithero R."/>
            <person name="Howden P."/>
            <person name="Barker N."/>
            <person name="Lloyd C."/>
            <person name="Stevens C."/>
            <person name="Harley J."/>
            <person name="Holt K."/>
            <person name="Panagiotidis G."/>
            <person name="Lovell J."/>
            <person name="Beasley H."/>
            <person name="Henderson C."/>
            <person name="Gordon D."/>
            <person name="Auger K."/>
            <person name="Wright D."/>
            <person name="Collins J."/>
            <person name="Raisen C."/>
            <person name="Dyer L."/>
            <person name="Leung K."/>
            <person name="Robertson L."/>
            <person name="Ambridge K."/>
            <person name="Leongamornlert D."/>
            <person name="McGuire S."/>
            <person name="Gilderthorp R."/>
            <person name="Griffiths C."/>
            <person name="Manthravadi D."/>
            <person name="Nichol S."/>
            <person name="Barker G."/>
            <person name="Whitehead S."/>
            <person name="Kay M."/>
            <person name="Brown J."/>
            <person name="Murnane C."/>
            <person name="Gray E."/>
            <person name="Humphries M."/>
            <person name="Sycamore N."/>
            <person name="Barker D."/>
            <person name="Saunders D."/>
            <person name="Wallis J."/>
            <person name="Babbage A."/>
            <person name="Hammond S."/>
            <person name="Mashreghi-Mohammadi M."/>
            <person name="Barr L."/>
            <person name="Martin S."/>
            <person name="Wray P."/>
            <person name="Ellington A."/>
            <person name="Matthews N."/>
            <person name="Ellwood M."/>
            <person name="Woodmansey R."/>
            <person name="Clark G."/>
            <person name="Cooper J."/>
            <person name="Tromans A."/>
            <person name="Grafham D."/>
            <person name="Skuce C."/>
            <person name="Pandian R."/>
            <person name="Andrews R."/>
            <person name="Harrison E."/>
            <person name="Kimberley A."/>
            <person name="Garnett J."/>
            <person name="Fosker N."/>
            <person name="Hall R."/>
            <person name="Garner P."/>
            <person name="Kelly D."/>
            <person name="Bird C."/>
            <person name="Palmer S."/>
            <person name="Gehring I."/>
            <person name="Berger A."/>
            <person name="Dooley C.M."/>
            <person name="Ersan-Urun Z."/>
            <person name="Eser C."/>
            <person name="Geiger H."/>
            <person name="Geisler M."/>
            <person name="Karotki L."/>
            <person name="Kirn A."/>
            <person name="Konantz J."/>
            <person name="Konantz M."/>
            <person name="Oberlander M."/>
            <person name="Rudolph-Geiger S."/>
            <person name="Teucke M."/>
            <person name="Lanz C."/>
            <person name="Raddatz G."/>
            <person name="Osoegawa K."/>
            <person name="Zhu B."/>
            <person name="Rapp A."/>
            <person name="Widaa S."/>
            <person name="Langford C."/>
            <person name="Yang F."/>
            <person name="Schuster S.C."/>
            <person name="Carter N.P."/>
            <person name="Harrow J."/>
            <person name="Ning Z."/>
            <person name="Herrero J."/>
            <person name="Searle S.M."/>
            <person name="Enright A."/>
            <person name="Geisler R."/>
            <person name="Plasterk R.H."/>
            <person name="Lee C."/>
            <person name="Westerfield M."/>
            <person name="de Jong P.J."/>
            <person name="Zon L.I."/>
            <person name="Postlethwait J.H."/>
            <person name="Nusslein-Volhard C."/>
            <person name="Hubbard T.J."/>
            <person name="Roest Crollius H."/>
            <person name="Rogers J."/>
            <person name="Stemple D.L."/>
        </authorList>
    </citation>
    <scope>NUCLEOTIDE SEQUENCE [LARGE SCALE GENOMIC DNA]</scope>
    <source>
        <strain>Tuebingen</strain>
    </source>
</reference>
<reference key="2">
    <citation type="submission" date="2003-01" db="EMBL/GenBank/DDBJ databases">
        <authorList>
            <consortium name="NIH - Zebrafish Gene Collection (ZGC) project"/>
        </authorList>
    </citation>
    <scope>NUCLEOTIDE SEQUENCE [LARGE SCALE MRNA]</scope>
    <source>
        <strain>AB</strain>
        <tissue>Embryo</tissue>
    </source>
</reference>
<reference key="3">
    <citation type="journal article" date="2008" name="J. Proteome Res.">
        <title>Online automated in vivo zebrafish phosphoproteomics: from large-scale analysis down to a single embryo.</title>
        <authorList>
            <person name="Lemeer S."/>
            <person name="Pinkse M.W.H."/>
            <person name="Mohammed S."/>
            <person name="van Breukelen B."/>
            <person name="den Hertog J."/>
            <person name="Slijper M."/>
            <person name="Heck A.J.R."/>
        </authorList>
    </citation>
    <scope>PHOSPHORYLATION [LARGE SCALE ANALYSIS] AT THR-387</scope>
    <scope>IDENTIFICATION BY MASS SPECTROMETRY</scope>
    <source>
        <tissue>Embryo</tissue>
    </source>
</reference>
<keyword id="KW-0067">ATP-binding</keyword>
<keyword id="KW-1003">Cell membrane</keyword>
<keyword id="KW-0418">Kinase</keyword>
<keyword id="KW-0460">Magnesium</keyword>
<keyword id="KW-0472">Membrane</keyword>
<keyword id="KW-0479">Metal-binding</keyword>
<keyword id="KW-0547">Nucleotide-binding</keyword>
<keyword id="KW-0539">Nucleus</keyword>
<keyword id="KW-0597">Phosphoprotein</keyword>
<keyword id="KW-1185">Reference proteome</keyword>
<keyword id="KW-0711">Selenium</keyword>
<keyword id="KW-0808">Transferase</keyword>
<name>SPS1_DANRE</name>
<dbReference type="EC" id="2.7.9.3" evidence="2"/>
<dbReference type="EMBL" id="BX276107">
    <property type="protein sequence ID" value="CAK04523.1"/>
    <property type="molecule type" value="Genomic_DNA"/>
</dbReference>
<dbReference type="EMBL" id="BX248392">
    <property type="protein sequence ID" value="CAK04523.1"/>
    <property type="status" value="JOINED"/>
    <property type="molecule type" value="Genomic_DNA"/>
</dbReference>
<dbReference type="EMBL" id="BX248392">
    <property type="protein sequence ID" value="CAM56407.1"/>
    <property type="molecule type" value="Genomic_DNA"/>
</dbReference>
<dbReference type="EMBL" id="BX276107">
    <property type="protein sequence ID" value="CAM56407.1"/>
    <property type="status" value="JOINED"/>
    <property type="molecule type" value="Genomic_DNA"/>
</dbReference>
<dbReference type="EMBL" id="BC045302">
    <property type="protein sequence ID" value="AAH45302.1"/>
    <property type="molecule type" value="mRNA"/>
</dbReference>
<dbReference type="RefSeq" id="NP_955995.2">
    <property type="nucleotide sequence ID" value="NM_199701.2"/>
</dbReference>
<dbReference type="RefSeq" id="XP_005159063.1">
    <property type="nucleotide sequence ID" value="XM_005159006.5"/>
</dbReference>
<dbReference type="RefSeq" id="XP_068070826.1">
    <property type="nucleotide sequence ID" value="XM_068214725.1"/>
</dbReference>
<dbReference type="SMR" id="Q7ZW38"/>
<dbReference type="FunCoup" id="Q7ZW38">
    <property type="interactions" value="664"/>
</dbReference>
<dbReference type="STRING" id="7955.ENSDARP00000075586"/>
<dbReference type="iPTMnet" id="Q7ZW38"/>
<dbReference type="PaxDb" id="7955-ENSDARP00000075586"/>
<dbReference type="Ensembl" id="ENSDART00000081143">
    <property type="protein sequence ID" value="ENSDARP00000075586"/>
    <property type="gene ID" value="ENSDARG00000058292"/>
</dbReference>
<dbReference type="Ensembl" id="ENSDART00000192807">
    <property type="protein sequence ID" value="ENSDARP00000148109"/>
    <property type="gene ID" value="ENSDARG00000058292"/>
</dbReference>
<dbReference type="GeneID" id="324947"/>
<dbReference type="KEGG" id="dre:324947"/>
<dbReference type="AGR" id="ZFIN:ZDB-GENE-030131-3670"/>
<dbReference type="CTD" id="22929"/>
<dbReference type="ZFIN" id="ZDB-GENE-030131-3670">
    <property type="gene designation" value="sephs1"/>
</dbReference>
<dbReference type="eggNOG" id="KOG3939">
    <property type="taxonomic scope" value="Eukaryota"/>
</dbReference>
<dbReference type="HOGENOM" id="CLU_032859_1_0_1"/>
<dbReference type="InParanoid" id="Q7ZW38"/>
<dbReference type="OMA" id="LARDWMC"/>
<dbReference type="OrthoDB" id="409395at2759"/>
<dbReference type="PhylomeDB" id="Q7ZW38"/>
<dbReference type="TreeFam" id="TF313811"/>
<dbReference type="PRO" id="PR:Q7ZW38"/>
<dbReference type="Proteomes" id="UP000000437">
    <property type="component" value="Alternate scaffold 18"/>
</dbReference>
<dbReference type="Proteomes" id="UP000000437">
    <property type="component" value="Chromosome 18"/>
</dbReference>
<dbReference type="Bgee" id="ENSDARG00000058292">
    <property type="expression patterns" value="Expressed in gastrula and 28 other cell types or tissues"/>
</dbReference>
<dbReference type="ExpressionAtlas" id="Q7ZW38">
    <property type="expression patterns" value="baseline and differential"/>
</dbReference>
<dbReference type="GO" id="GO:0005737">
    <property type="term" value="C:cytoplasm"/>
    <property type="evidence" value="ECO:0000318"/>
    <property type="project" value="GO_Central"/>
</dbReference>
<dbReference type="GO" id="GO:0031965">
    <property type="term" value="C:nuclear membrane"/>
    <property type="evidence" value="ECO:0000250"/>
    <property type="project" value="UniProtKB"/>
</dbReference>
<dbReference type="GO" id="GO:0005886">
    <property type="term" value="C:plasma membrane"/>
    <property type="evidence" value="ECO:0000250"/>
    <property type="project" value="UniProtKB"/>
</dbReference>
<dbReference type="GO" id="GO:0005524">
    <property type="term" value="F:ATP binding"/>
    <property type="evidence" value="ECO:0007669"/>
    <property type="project" value="UniProtKB-KW"/>
</dbReference>
<dbReference type="GO" id="GO:0046872">
    <property type="term" value="F:metal ion binding"/>
    <property type="evidence" value="ECO:0007669"/>
    <property type="project" value="UniProtKB-KW"/>
</dbReference>
<dbReference type="GO" id="GO:0046982">
    <property type="term" value="F:protein heterodimerization activity"/>
    <property type="evidence" value="ECO:0000250"/>
    <property type="project" value="UniProtKB"/>
</dbReference>
<dbReference type="GO" id="GO:0042803">
    <property type="term" value="F:protein homodimerization activity"/>
    <property type="evidence" value="ECO:0000250"/>
    <property type="project" value="UniProtKB"/>
</dbReference>
<dbReference type="GO" id="GO:0004756">
    <property type="term" value="F:selenide, water dikinase activity"/>
    <property type="evidence" value="ECO:0000318"/>
    <property type="project" value="GO_Central"/>
</dbReference>
<dbReference type="GO" id="GO:0016260">
    <property type="term" value="P:selenocysteine biosynthetic process"/>
    <property type="evidence" value="ECO:0000318"/>
    <property type="project" value="GO_Central"/>
</dbReference>
<dbReference type="CDD" id="cd02195">
    <property type="entry name" value="SelD"/>
    <property type="match status" value="1"/>
</dbReference>
<dbReference type="FunFam" id="3.30.1330.10:FF:000006">
    <property type="entry name" value="Selenide water dikinase 1"/>
    <property type="match status" value="1"/>
</dbReference>
<dbReference type="FunFam" id="3.90.650.10:FF:000003">
    <property type="entry name" value="Selenide, water dikinase 1"/>
    <property type="match status" value="1"/>
</dbReference>
<dbReference type="Gene3D" id="3.90.650.10">
    <property type="entry name" value="PurM-like C-terminal domain"/>
    <property type="match status" value="1"/>
</dbReference>
<dbReference type="Gene3D" id="3.30.1330.10">
    <property type="entry name" value="PurM-like, N-terminal domain"/>
    <property type="match status" value="1"/>
</dbReference>
<dbReference type="InterPro" id="IPR010918">
    <property type="entry name" value="PurM-like_C_dom"/>
</dbReference>
<dbReference type="InterPro" id="IPR036676">
    <property type="entry name" value="PurM-like_C_sf"/>
</dbReference>
<dbReference type="InterPro" id="IPR016188">
    <property type="entry name" value="PurM-like_N"/>
</dbReference>
<dbReference type="InterPro" id="IPR036921">
    <property type="entry name" value="PurM-like_N_sf"/>
</dbReference>
<dbReference type="InterPro" id="IPR004536">
    <property type="entry name" value="SPS/SelD"/>
</dbReference>
<dbReference type="NCBIfam" id="TIGR00476">
    <property type="entry name" value="selD"/>
    <property type="match status" value="1"/>
</dbReference>
<dbReference type="PANTHER" id="PTHR10256">
    <property type="entry name" value="SELENIDE, WATER DIKINASE"/>
    <property type="match status" value="1"/>
</dbReference>
<dbReference type="PANTHER" id="PTHR10256:SF2">
    <property type="entry name" value="SELENIDE, WATER DIKINASE 1"/>
    <property type="match status" value="1"/>
</dbReference>
<dbReference type="Pfam" id="PF00586">
    <property type="entry name" value="AIRS"/>
    <property type="match status" value="1"/>
</dbReference>
<dbReference type="Pfam" id="PF02769">
    <property type="entry name" value="AIRS_C"/>
    <property type="match status" value="1"/>
</dbReference>
<dbReference type="PIRSF" id="PIRSF036407">
    <property type="entry name" value="Selenphspht_syn"/>
    <property type="match status" value="1"/>
</dbReference>
<dbReference type="SUPFAM" id="SSF56042">
    <property type="entry name" value="PurM C-terminal domain-like"/>
    <property type="match status" value="1"/>
</dbReference>
<dbReference type="SUPFAM" id="SSF55326">
    <property type="entry name" value="PurM N-terminal domain-like"/>
    <property type="match status" value="1"/>
</dbReference>
<accession>Q7ZW38</accession>
<accession>Q1LXT8</accession>
<gene>
    <name type="primary">sephs1</name>
    <name type="ORF">si:ch211-220f12.5</name>
</gene>
<organism>
    <name type="scientific">Danio rerio</name>
    <name type="common">Zebrafish</name>
    <name type="synonym">Brachydanio rerio</name>
    <dbReference type="NCBI Taxonomy" id="7955"/>
    <lineage>
        <taxon>Eukaryota</taxon>
        <taxon>Metazoa</taxon>
        <taxon>Chordata</taxon>
        <taxon>Craniata</taxon>
        <taxon>Vertebrata</taxon>
        <taxon>Euteleostomi</taxon>
        <taxon>Actinopterygii</taxon>
        <taxon>Neopterygii</taxon>
        <taxon>Teleostei</taxon>
        <taxon>Ostariophysi</taxon>
        <taxon>Cypriniformes</taxon>
        <taxon>Danionidae</taxon>
        <taxon>Danioninae</taxon>
        <taxon>Danio</taxon>
    </lineage>
</organism>
<feature type="chain" id="PRO_0000312508" description="Selenide, water dikinase 1">
    <location>
        <begin position="1"/>
        <end position="392"/>
    </location>
</feature>
<feature type="active site" evidence="3">
    <location>
        <position position="31"/>
    </location>
</feature>
<feature type="binding site" description="in other chain" evidence="2">
    <location>
        <position position="32"/>
    </location>
    <ligand>
        <name>ATP</name>
        <dbReference type="ChEBI" id="CHEBI:30616"/>
        <note>ligand shared between dimeric partners</note>
    </ligand>
</feature>
<feature type="binding site" description="in other chain" evidence="2">
    <location>
        <begin position="67"/>
        <end position="69"/>
    </location>
    <ligand>
        <name>ATP</name>
        <dbReference type="ChEBI" id="CHEBI:30616"/>
        <note>ligand shared between dimeric partners</note>
    </ligand>
</feature>
<feature type="binding site" evidence="2">
    <location>
        <position position="69"/>
    </location>
    <ligand>
        <name>Mg(2+)</name>
        <dbReference type="ChEBI" id="CHEBI:18420"/>
    </ligand>
</feature>
<feature type="binding site" description="in other chain" evidence="2">
    <location>
        <position position="87"/>
    </location>
    <ligand>
        <name>ATP</name>
        <dbReference type="ChEBI" id="CHEBI:30616"/>
        <note>ligand shared between dimeric partners</note>
    </ligand>
</feature>
<feature type="binding site" description="in other chain" evidence="2">
    <location>
        <position position="110"/>
    </location>
    <ligand>
        <name>ATP</name>
        <dbReference type="ChEBI" id="CHEBI:30616"/>
        <note>ligand shared between dimeric partners</note>
    </ligand>
</feature>
<feature type="binding site" evidence="2">
    <location>
        <position position="110"/>
    </location>
    <ligand>
        <name>Mg(2+)</name>
        <dbReference type="ChEBI" id="CHEBI:18420"/>
    </ligand>
</feature>
<feature type="binding site" evidence="2">
    <location>
        <begin position="161"/>
        <end position="164"/>
    </location>
    <ligand>
        <name>ATP</name>
        <dbReference type="ChEBI" id="CHEBI:30616"/>
        <note>ligand shared between dimeric partners</note>
    </ligand>
</feature>
<feature type="binding site" evidence="2">
    <location>
        <position position="265"/>
    </location>
    <ligand>
        <name>Mg(2+)</name>
        <dbReference type="ChEBI" id="CHEBI:18420"/>
    </ligand>
</feature>
<feature type="site" description="Important for catalytic activity" evidence="1">
    <location>
        <position position="32"/>
    </location>
</feature>
<feature type="modified residue" description="Phosphothreonine" evidence="4">
    <location>
        <position position="387"/>
    </location>
</feature>
<feature type="sequence conflict" description="In Ref. 2; AAH45302." evidence="5" ref="2">
    <original>D</original>
    <variation>G</variation>
    <location>
        <position position="138"/>
    </location>
</feature>
<comment type="function">
    <text evidence="2">Synthesizes selenophosphate from selenide and ATP.</text>
</comment>
<comment type="catalytic activity">
    <reaction evidence="2">
        <text>hydrogenselenide + ATP + H2O = selenophosphate + AMP + phosphate + 2 H(+)</text>
        <dbReference type="Rhea" id="RHEA:18737"/>
        <dbReference type="ChEBI" id="CHEBI:15377"/>
        <dbReference type="ChEBI" id="CHEBI:15378"/>
        <dbReference type="ChEBI" id="CHEBI:16144"/>
        <dbReference type="ChEBI" id="CHEBI:29317"/>
        <dbReference type="ChEBI" id="CHEBI:30616"/>
        <dbReference type="ChEBI" id="CHEBI:43474"/>
        <dbReference type="ChEBI" id="CHEBI:456215"/>
        <dbReference type="EC" id="2.7.9.3"/>
    </reaction>
</comment>
<comment type="cofactor">
    <cofactor evidence="2">
        <name>Mg(2+)</name>
        <dbReference type="ChEBI" id="CHEBI:18420"/>
    </cofactor>
    <text evidence="2">Binds 1 Mg(2+) ion per monomer.</text>
</comment>
<comment type="subunit">
    <text evidence="2">Homodimer.</text>
</comment>
<comment type="subcellular location">
    <subcellularLocation>
        <location evidence="2">Cell membrane</location>
        <topology evidence="5">Peripheral membrane protein</topology>
    </subcellularLocation>
    <subcellularLocation>
        <location evidence="2">Nucleus membrane</location>
        <topology evidence="5">Peripheral membrane protein</topology>
    </subcellularLocation>
</comment>
<comment type="similarity">
    <text evidence="5">Belongs to the selenophosphate synthase 1 family. Class II subfamily.</text>
</comment>
<comment type="caution">
    <text evidence="5">The conserved active site Cys (or selenocysteine) residue in position 29 is replaced by a Thr. However, as function in selenoprotein synthesis is probable, it is possible Cys-31 is the active site.</text>
</comment>